<name>CH60_PSYA2</name>
<feature type="chain" id="PRO_0000256954" description="Chaperonin GroEL">
    <location>
        <begin position="1"/>
        <end position="546"/>
    </location>
</feature>
<feature type="binding site" evidence="1">
    <location>
        <begin position="29"/>
        <end position="32"/>
    </location>
    <ligand>
        <name>ATP</name>
        <dbReference type="ChEBI" id="CHEBI:30616"/>
    </ligand>
</feature>
<feature type="binding site" evidence="1">
    <location>
        <position position="50"/>
    </location>
    <ligand>
        <name>ATP</name>
        <dbReference type="ChEBI" id="CHEBI:30616"/>
    </ligand>
</feature>
<feature type="binding site" evidence="1">
    <location>
        <begin position="86"/>
        <end position="90"/>
    </location>
    <ligand>
        <name>ATP</name>
        <dbReference type="ChEBI" id="CHEBI:30616"/>
    </ligand>
</feature>
<feature type="binding site" evidence="1">
    <location>
        <position position="414"/>
    </location>
    <ligand>
        <name>ATP</name>
        <dbReference type="ChEBI" id="CHEBI:30616"/>
    </ligand>
</feature>
<feature type="binding site" evidence="1">
    <location>
        <begin position="478"/>
        <end position="480"/>
    </location>
    <ligand>
        <name>ATP</name>
        <dbReference type="ChEBI" id="CHEBI:30616"/>
    </ligand>
</feature>
<feature type="binding site" evidence="1">
    <location>
        <position position="494"/>
    </location>
    <ligand>
        <name>ATP</name>
        <dbReference type="ChEBI" id="CHEBI:30616"/>
    </ligand>
</feature>
<accession>Q4FU94</accession>
<dbReference type="EC" id="5.6.1.7" evidence="1"/>
<dbReference type="EMBL" id="CP000082">
    <property type="protein sequence ID" value="AAZ18414.1"/>
    <property type="molecule type" value="Genomic_DNA"/>
</dbReference>
<dbReference type="RefSeq" id="WP_011279843.1">
    <property type="nucleotide sequence ID" value="NC_007204.1"/>
</dbReference>
<dbReference type="SMR" id="Q4FU94"/>
<dbReference type="STRING" id="259536.Psyc_0553"/>
<dbReference type="KEGG" id="par:Psyc_0553"/>
<dbReference type="eggNOG" id="COG0459">
    <property type="taxonomic scope" value="Bacteria"/>
</dbReference>
<dbReference type="HOGENOM" id="CLU_016503_3_0_6"/>
<dbReference type="OrthoDB" id="9766614at2"/>
<dbReference type="Proteomes" id="UP000000546">
    <property type="component" value="Chromosome"/>
</dbReference>
<dbReference type="GO" id="GO:0005737">
    <property type="term" value="C:cytoplasm"/>
    <property type="evidence" value="ECO:0007669"/>
    <property type="project" value="UniProtKB-SubCell"/>
</dbReference>
<dbReference type="GO" id="GO:0005524">
    <property type="term" value="F:ATP binding"/>
    <property type="evidence" value="ECO:0007669"/>
    <property type="project" value="UniProtKB-UniRule"/>
</dbReference>
<dbReference type="GO" id="GO:0140662">
    <property type="term" value="F:ATP-dependent protein folding chaperone"/>
    <property type="evidence" value="ECO:0007669"/>
    <property type="project" value="InterPro"/>
</dbReference>
<dbReference type="GO" id="GO:0016853">
    <property type="term" value="F:isomerase activity"/>
    <property type="evidence" value="ECO:0007669"/>
    <property type="project" value="UniProtKB-KW"/>
</dbReference>
<dbReference type="GO" id="GO:0051082">
    <property type="term" value="F:unfolded protein binding"/>
    <property type="evidence" value="ECO:0007669"/>
    <property type="project" value="UniProtKB-UniRule"/>
</dbReference>
<dbReference type="GO" id="GO:0042026">
    <property type="term" value="P:protein refolding"/>
    <property type="evidence" value="ECO:0007669"/>
    <property type="project" value="UniProtKB-UniRule"/>
</dbReference>
<dbReference type="CDD" id="cd03344">
    <property type="entry name" value="GroEL"/>
    <property type="match status" value="1"/>
</dbReference>
<dbReference type="FunFam" id="1.10.560.10:FF:000001">
    <property type="entry name" value="60 kDa chaperonin"/>
    <property type="match status" value="1"/>
</dbReference>
<dbReference type="FunFam" id="3.50.7.10:FF:000001">
    <property type="entry name" value="60 kDa chaperonin"/>
    <property type="match status" value="1"/>
</dbReference>
<dbReference type="Gene3D" id="3.50.7.10">
    <property type="entry name" value="GroEL"/>
    <property type="match status" value="1"/>
</dbReference>
<dbReference type="Gene3D" id="1.10.560.10">
    <property type="entry name" value="GroEL-like equatorial domain"/>
    <property type="match status" value="1"/>
</dbReference>
<dbReference type="Gene3D" id="3.30.260.10">
    <property type="entry name" value="TCP-1-like chaperonin intermediate domain"/>
    <property type="match status" value="1"/>
</dbReference>
<dbReference type="HAMAP" id="MF_00600">
    <property type="entry name" value="CH60"/>
    <property type="match status" value="1"/>
</dbReference>
<dbReference type="InterPro" id="IPR018370">
    <property type="entry name" value="Chaperonin_Cpn60_CS"/>
</dbReference>
<dbReference type="InterPro" id="IPR001844">
    <property type="entry name" value="Cpn60/GroEL"/>
</dbReference>
<dbReference type="InterPro" id="IPR002423">
    <property type="entry name" value="Cpn60/GroEL/TCP-1"/>
</dbReference>
<dbReference type="InterPro" id="IPR027409">
    <property type="entry name" value="GroEL-like_apical_dom_sf"/>
</dbReference>
<dbReference type="InterPro" id="IPR027413">
    <property type="entry name" value="GROEL-like_equatorial_sf"/>
</dbReference>
<dbReference type="InterPro" id="IPR027410">
    <property type="entry name" value="TCP-1-like_intermed_sf"/>
</dbReference>
<dbReference type="NCBIfam" id="TIGR02348">
    <property type="entry name" value="GroEL"/>
    <property type="match status" value="1"/>
</dbReference>
<dbReference type="NCBIfam" id="NF000592">
    <property type="entry name" value="PRK00013.1"/>
    <property type="match status" value="1"/>
</dbReference>
<dbReference type="NCBIfam" id="NF009487">
    <property type="entry name" value="PRK12849.1"/>
    <property type="match status" value="1"/>
</dbReference>
<dbReference type="NCBIfam" id="NF009488">
    <property type="entry name" value="PRK12850.1"/>
    <property type="match status" value="1"/>
</dbReference>
<dbReference type="NCBIfam" id="NF009489">
    <property type="entry name" value="PRK12851.1"/>
    <property type="match status" value="1"/>
</dbReference>
<dbReference type="PANTHER" id="PTHR45633">
    <property type="entry name" value="60 KDA HEAT SHOCK PROTEIN, MITOCHONDRIAL"/>
    <property type="match status" value="1"/>
</dbReference>
<dbReference type="Pfam" id="PF00118">
    <property type="entry name" value="Cpn60_TCP1"/>
    <property type="match status" value="1"/>
</dbReference>
<dbReference type="PRINTS" id="PR00298">
    <property type="entry name" value="CHAPERONIN60"/>
</dbReference>
<dbReference type="SUPFAM" id="SSF52029">
    <property type="entry name" value="GroEL apical domain-like"/>
    <property type="match status" value="1"/>
</dbReference>
<dbReference type="SUPFAM" id="SSF48592">
    <property type="entry name" value="GroEL equatorial domain-like"/>
    <property type="match status" value="1"/>
</dbReference>
<dbReference type="SUPFAM" id="SSF54849">
    <property type="entry name" value="GroEL-intermediate domain like"/>
    <property type="match status" value="1"/>
</dbReference>
<dbReference type="PROSITE" id="PS00296">
    <property type="entry name" value="CHAPERONINS_CPN60"/>
    <property type="match status" value="1"/>
</dbReference>
<comment type="function">
    <text evidence="1">Together with its co-chaperonin GroES, plays an essential role in assisting protein folding. The GroEL-GroES system forms a nano-cage that allows encapsulation of the non-native substrate proteins and provides a physical environment optimized to promote and accelerate protein folding.</text>
</comment>
<comment type="catalytic activity">
    <reaction evidence="1">
        <text>ATP + H2O + a folded polypeptide = ADP + phosphate + an unfolded polypeptide.</text>
        <dbReference type="EC" id="5.6.1.7"/>
    </reaction>
</comment>
<comment type="subunit">
    <text evidence="1">Forms a cylinder of 14 subunits composed of two heptameric rings stacked back-to-back. Interacts with the co-chaperonin GroES.</text>
</comment>
<comment type="subcellular location">
    <subcellularLocation>
        <location evidence="1">Cytoplasm</location>
    </subcellularLocation>
</comment>
<comment type="similarity">
    <text evidence="1">Belongs to the chaperonin (HSP60) family.</text>
</comment>
<keyword id="KW-0067">ATP-binding</keyword>
<keyword id="KW-0143">Chaperone</keyword>
<keyword id="KW-0963">Cytoplasm</keyword>
<keyword id="KW-0413">Isomerase</keyword>
<keyword id="KW-0547">Nucleotide-binding</keyword>
<keyword id="KW-1185">Reference proteome</keyword>
<evidence type="ECO:0000255" key="1">
    <source>
        <dbReference type="HAMAP-Rule" id="MF_00600"/>
    </source>
</evidence>
<reference key="1">
    <citation type="journal article" date="2010" name="Appl. Environ. Microbiol.">
        <title>The genome sequence of Psychrobacter arcticus 273-4, a psychroactive Siberian permafrost bacterium, reveals mechanisms for adaptation to low-temperature growth.</title>
        <authorList>
            <person name="Ayala-del-Rio H.L."/>
            <person name="Chain P.S."/>
            <person name="Grzymski J.J."/>
            <person name="Ponder M.A."/>
            <person name="Ivanova N."/>
            <person name="Bergholz P.W."/>
            <person name="Di Bartolo G."/>
            <person name="Hauser L."/>
            <person name="Land M."/>
            <person name="Bakermans C."/>
            <person name="Rodrigues D."/>
            <person name="Klappenbach J."/>
            <person name="Zarka D."/>
            <person name="Larimer F."/>
            <person name="Richardson P."/>
            <person name="Murray A."/>
            <person name="Thomashow M."/>
            <person name="Tiedje J.M."/>
        </authorList>
    </citation>
    <scope>NUCLEOTIDE SEQUENCE [LARGE SCALE GENOMIC DNA]</scope>
    <source>
        <strain>DSM 17307 / VKM B-2377 / 273-4</strain>
    </source>
</reference>
<organism>
    <name type="scientific">Psychrobacter arcticus (strain DSM 17307 / VKM B-2377 / 273-4)</name>
    <dbReference type="NCBI Taxonomy" id="259536"/>
    <lineage>
        <taxon>Bacteria</taxon>
        <taxon>Pseudomonadati</taxon>
        <taxon>Pseudomonadota</taxon>
        <taxon>Gammaproteobacteria</taxon>
        <taxon>Moraxellales</taxon>
        <taxon>Moraxellaceae</taxon>
        <taxon>Psychrobacter</taxon>
    </lineage>
</organism>
<protein>
    <recommendedName>
        <fullName evidence="1">Chaperonin GroEL</fullName>
        <ecNumber evidence="1">5.6.1.7</ecNumber>
    </recommendedName>
    <alternativeName>
        <fullName evidence="1">60 kDa chaperonin</fullName>
    </alternativeName>
    <alternativeName>
        <fullName evidence="1">Chaperonin-60</fullName>
        <shortName evidence="1">Cpn60</shortName>
    </alternativeName>
</protein>
<proteinExistence type="inferred from homology"/>
<gene>
    <name evidence="1" type="primary">groEL</name>
    <name evidence="1" type="synonym">groL</name>
    <name type="ordered locus">Psyc_0553</name>
</gene>
<sequence length="546" mass="57708">MAKDVKFGIDARKQMMDGVNILANAVRVTLGPKGRNVVIDKSFGAPTITKDGVSVAKEIELENKFENMGAQLVREVASRTNDVAGDGTTTATVLAQSILQEGMKSVAAGMNPMDLKRGIDKAVRAAVEQIHLLSTPADDSKAIAQVGSISANSDTKIGELIAQAMEKVGKQGVITVEEGSSFEDTLEVVEGMQFDRGYISPYFANKQDSLTAEFENPYILLVDKKISNIREIVPLLEQVMQQSKPLLIIAEDVENEALATLVVNNMRGGLKTCAVKAPGFGDRRKAMLEDIATLTGGTVISEEIGLSLETATLEQLGTAKKVTVGKENTVIVDGAGHSADIENRVESIRRQVEESTSDYDKEKLQERMAKLAGGVAVIKVGAATETEMKEKKDRVDDALHATRAAVEEGVVPGGGVALVRAMNALSELRGDNDDQNAGINILRRAMEAPLRQIVTNSGEEASVVVNEVKSGSGNYGYNAASGEYGDMLEMGILDPAKVARSALENAASVAGLMLTTEVMITDLPQGDDGMAGMGAGGGMGGMGGMM</sequence>